<comment type="function">
    <text evidence="1">This protein binds to 23S rRNA in the presence of protein L20.</text>
</comment>
<comment type="subunit">
    <text evidence="1">Part of the 50S ribosomal subunit. Contacts protein L20.</text>
</comment>
<comment type="similarity">
    <text evidence="1">Belongs to the bacterial ribosomal protein bL21 family.</text>
</comment>
<name>RL21_PSEA8</name>
<evidence type="ECO:0000255" key="1">
    <source>
        <dbReference type="HAMAP-Rule" id="MF_01363"/>
    </source>
</evidence>
<evidence type="ECO:0000305" key="2"/>
<dbReference type="EMBL" id="FM209186">
    <property type="protein sequence ID" value="CAW29705.1"/>
    <property type="molecule type" value="Genomic_DNA"/>
</dbReference>
<dbReference type="RefSeq" id="WP_003094761.1">
    <property type="nucleotide sequence ID" value="NC_011770.1"/>
</dbReference>
<dbReference type="SMR" id="B7V0B1"/>
<dbReference type="KEGG" id="pag:PLES_49511"/>
<dbReference type="HOGENOM" id="CLU_061463_3_2_6"/>
<dbReference type="GO" id="GO:0005737">
    <property type="term" value="C:cytoplasm"/>
    <property type="evidence" value="ECO:0007669"/>
    <property type="project" value="UniProtKB-ARBA"/>
</dbReference>
<dbReference type="GO" id="GO:1990904">
    <property type="term" value="C:ribonucleoprotein complex"/>
    <property type="evidence" value="ECO:0007669"/>
    <property type="project" value="UniProtKB-KW"/>
</dbReference>
<dbReference type="GO" id="GO:0005840">
    <property type="term" value="C:ribosome"/>
    <property type="evidence" value="ECO:0007669"/>
    <property type="project" value="UniProtKB-KW"/>
</dbReference>
<dbReference type="GO" id="GO:0019843">
    <property type="term" value="F:rRNA binding"/>
    <property type="evidence" value="ECO:0007669"/>
    <property type="project" value="UniProtKB-UniRule"/>
</dbReference>
<dbReference type="GO" id="GO:0003735">
    <property type="term" value="F:structural constituent of ribosome"/>
    <property type="evidence" value="ECO:0007669"/>
    <property type="project" value="InterPro"/>
</dbReference>
<dbReference type="GO" id="GO:0006412">
    <property type="term" value="P:translation"/>
    <property type="evidence" value="ECO:0007669"/>
    <property type="project" value="UniProtKB-UniRule"/>
</dbReference>
<dbReference type="HAMAP" id="MF_01363">
    <property type="entry name" value="Ribosomal_bL21"/>
    <property type="match status" value="1"/>
</dbReference>
<dbReference type="InterPro" id="IPR028909">
    <property type="entry name" value="bL21-like"/>
</dbReference>
<dbReference type="InterPro" id="IPR036164">
    <property type="entry name" value="bL21-like_sf"/>
</dbReference>
<dbReference type="InterPro" id="IPR001787">
    <property type="entry name" value="Ribosomal_bL21"/>
</dbReference>
<dbReference type="InterPro" id="IPR018258">
    <property type="entry name" value="Ribosomal_bL21_CS"/>
</dbReference>
<dbReference type="NCBIfam" id="TIGR00061">
    <property type="entry name" value="L21"/>
    <property type="match status" value="1"/>
</dbReference>
<dbReference type="PANTHER" id="PTHR21349">
    <property type="entry name" value="50S RIBOSOMAL PROTEIN L21"/>
    <property type="match status" value="1"/>
</dbReference>
<dbReference type="PANTHER" id="PTHR21349:SF0">
    <property type="entry name" value="LARGE RIBOSOMAL SUBUNIT PROTEIN BL21M"/>
    <property type="match status" value="1"/>
</dbReference>
<dbReference type="Pfam" id="PF00829">
    <property type="entry name" value="Ribosomal_L21p"/>
    <property type="match status" value="1"/>
</dbReference>
<dbReference type="SUPFAM" id="SSF141091">
    <property type="entry name" value="L21p-like"/>
    <property type="match status" value="1"/>
</dbReference>
<dbReference type="PROSITE" id="PS01169">
    <property type="entry name" value="RIBOSOMAL_L21"/>
    <property type="match status" value="1"/>
</dbReference>
<organism>
    <name type="scientific">Pseudomonas aeruginosa (strain LESB58)</name>
    <dbReference type="NCBI Taxonomy" id="557722"/>
    <lineage>
        <taxon>Bacteria</taxon>
        <taxon>Pseudomonadati</taxon>
        <taxon>Pseudomonadota</taxon>
        <taxon>Gammaproteobacteria</taxon>
        <taxon>Pseudomonadales</taxon>
        <taxon>Pseudomonadaceae</taxon>
        <taxon>Pseudomonas</taxon>
    </lineage>
</organism>
<gene>
    <name evidence="1" type="primary">rplU</name>
    <name type="ordered locus">PLES_49511</name>
</gene>
<protein>
    <recommendedName>
        <fullName evidence="1">Large ribosomal subunit protein bL21</fullName>
    </recommendedName>
    <alternativeName>
        <fullName evidence="2">50S ribosomal protein L21</fullName>
    </alternativeName>
</protein>
<accession>B7V0B1</accession>
<sequence length="103" mass="11654">MYAVIVTGGKQHKVTEGEFLKVEKLDVATGEAIDFDRVLLVANGEDVKIGLPVVEGAKVTAEVVSHGRHDKVRIIKFRRRKHHMKRQGHRQWFTEIKITGIQA</sequence>
<feature type="chain" id="PRO_1000143836" description="Large ribosomal subunit protein bL21">
    <location>
        <begin position="1"/>
        <end position="103"/>
    </location>
</feature>
<proteinExistence type="inferred from homology"/>
<keyword id="KW-0687">Ribonucleoprotein</keyword>
<keyword id="KW-0689">Ribosomal protein</keyword>
<keyword id="KW-0694">RNA-binding</keyword>
<keyword id="KW-0699">rRNA-binding</keyword>
<reference key="1">
    <citation type="journal article" date="2009" name="Genome Res.">
        <title>Newly introduced genomic prophage islands are critical determinants of in vivo competitiveness in the Liverpool epidemic strain of Pseudomonas aeruginosa.</title>
        <authorList>
            <person name="Winstanley C."/>
            <person name="Langille M.G.I."/>
            <person name="Fothergill J.L."/>
            <person name="Kukavica-Ibrulj I."/>
            <person name="Paradis-Bleau C."/>
            <person name="Sanschagrin F."/>
            <person name="Thomson N.R."/>
            <person name="Winsor G.L."/>
            <person name="Quail M.A."/>
            <person name="Lennard N."/>
            <person name="Bignell A."/>
            <person name="Clarke L."/>
            <person name="Seeger K."/>
            <person name="Saunders D."/>
            <person name="Harris D."/>
            <person name="Parkhill J."/>
            <person name="Hancock R.E.W."/>
            <person name="Brinkman F.S.L."/>
            <person name="Levesque R.C."/>
        </authorList>
    </citation>
    <scope>NUCLEOTIDE SEQUENCE [LARGE SCALE GENOMIC DNA]</scope>
    <source>
        <strain>LESB58</strain>
    </source>
</reference>